<reference key="1">
    <citation type="journal article" date="2003" name="Genome Res.">
        <title>Comparative genome analysis of Vibrio vulnificus, a marine pathogen.</title>
        <authorList>
            <person name="Chen C.-Y."/>
            <person name="Wu K.-M."/>
            <person name="Chang Y.-C."/>
            <person name="Chang C.-H."/>
            <person name="Tsai H.-C."/>
            <person name="Liao T.-L."/>
            <person name="Liu Y.-M."/>
            <person name="Chen H.-J."/>
            <person name="Shen A.B.-T."/>
            <person name="Li J.-C."/>
            <person name="Su T.-L."/>
            <person name="Shao C.-P."/>
            <person name="Lee C.-T."/>
            <person name="Hor L.-I."/>
            <person name="Tsai S.-F."/>
        </authorList>
    </citation>
    <scope>NUCLEOTIDE SEQUENCE [LARGE SCALE GENOMIC DNA]</scope>
    <source>
        <strain>YJ016</strain>
    </source>
</reference>
<organism>
    <name type="scientific">Vibrio vulnificus (strain YJ016)</name>
    <dbReference type="NCBI Taxonomy" id="196600"/>
    <lineage>
        <taxon>Bacteria</taxon>
        <taxon>Pseudomonadati</taxon>
        <taxon>Pseudomonadota</taxon>
        <taxon>Gammaproteobacteria</taxon>
        <taxon>Vibrionales</taxon>
        <taxon>Vibrionaceae</taxon>
        <taxon>Vibrio</taxon>
    </lineage>
</organism>
<gene>
    <name evidence="2" type="primary">folE</name>
    <name type="ordered locus">VVA1092</name>
</gene>
<comment type="catalytic activity">
    <reaction evidence="2">
        <text>GTP + H2O = 7,8-dihydroneopterin 3'-triphosphate + formate + H(+)</text>
        <dbReference type="Rhea" id="RHEA:17473"/>
        <dbReference type="ChEBI" id="CHEBI:15377"/>
        <dbReference type="ChEBI" id="CHEBI:15378"/>
        <dbReference type="ChEBI" id="CHEBI:15740"/>
        <dbReference type="ChEBI" id="CHEBI:37565"/>
        <dbReference type="ChEBI" id="CHEBI:58462"/>
        <dbReference type="EC" id="3.5.4.16"/>
    </reaction>
</comment>
<comment type="pathway">
    <text evidence="2">Cofactor biosynthesis; 7,8-dihydroneopterin triphosphate biosynthesis; 7,8-dihydroneopterin triphosphate from GTP: step 1/1.</text>
</comment>
<comment type="subunit">
    <text evidence="1">Toroid-shaped homodecamer, composed of two pentamers of five dimers.</text>
</comment>
<comment type="similarity">
    <text evidence="2">Belongs to the GTP cyclohydrolase I family.</text>
</comment>
<protein>
    <recommendedName>
        <fullName evidence="2">GTP cyclohydrolase 1</fullName>
        <ecNumber evidence="2">3.5.4.16</ecNumber>
    </recommendedName>
    <alternativeName>
        <fullName evidence="2">GTP cyclohydrolase I</fullName>
        <shortName evidence="2">GTP-CH-I</shortName>
    </alternativeName>
</protein>
<sequence>MSGLSESAQLVKQALEKRGLETPMVPNQFSREEKKEKIEHHMREILSLLELDLTDDSLEETPRRIAKMYVDEVFSGLDYQNFPKITVIENKMNVSEMVRVKEITLTSTCEHHLVTIDGKAAVAYIPRGKIIGLSKINRIVRFFAQRPQVQERMTQQILVALQTLLESDDVAVTIDATHYCVKSRGVMDATSETTTTALGGIFKSNPATRAEFLHGLR</sequence>
<name>GCH1_VIBVY</name>
<keyword id="KW-0342">GTP-binding</keyword>
<keyword id="KW-0378">Hydrolase</keyword>
<keyword id="KW-0479">Metal-binding</keyword>
<keyword id="KW-0547">Nucleotide-binding</keyword>
<keyword id="KW-0554">One-carbon metabolism</keyword>
<keyword id="KW-0862">Zinc</keyword>
<proteinExistence type="inferred from homology"/>
<accession>Q7MDE5</accession>
<feature type="chain" id="PRO_0000119463" description="GTP cyclohydrolase 1">
    <location>
        <begin position="1"/>
        <end position="217"/>
    </location>
</feature>
<feature type="binding site" evidence="2">
    <location>
        <position position="109"/>
    </location>
    <ligand>
        <name>Zn(2+)</name>
        <dbReference type="ChEBI" id="CHEBI:29105"/>
    </ligand>
</feature>
<feature type="binding site" evidence="2">
    <location>
        <position position="112"/>
    </location>
    <ligand>
        <name>Zn(2+)</name>
        <dbReference type="ChEBI" id="CHEBI:29105"/>
    </ligand>
</feature>
<feature type="binding site" evidence="2">
    <location>
        <position position="180"/>
    </location>
    <ligand>
        <name>Zn(2+)</name>
        <dbReference type="ChEBI" id="CHEBI:29105"/>
    </ligand>
</feature>
<dbReference type="EC" id="3.5.4.16" evidence="2"/>
<dbReference type="EMBL" id="BA000038">
    <property type="protein sequence ID" value="BAC97117.1"/>
    <property type="molecule type" value="Genomic_DNA"/>
</dbReference>
<dbReference type="RefSeq" id="WP_011081489.1">
    <property type="nucleotide sequence ID" value="NC_005140.1"/>
</dbReference>
<dbReference type="SMR" id="Q7MDE5"/>
<dbReference type="STRING" id="672.VV93_v1c40320"/>
<dbReference type="GeneID" id="93897825"/>
<dbReference type="KEGG" id="vvy:VVA1092"/>
<dbReference type="eggNOG" id="COG0302">
    <property type="taxonomic scope" value="Bacteria"/>
</dbReference>
<dbReference type="HOGENOM" id="CLU_049768_3_2_6"/>
<dbReference type="UniPathway" id="UPA00848">
    <property type="reaction ID" value="UER00151"/>
</dbReference>
<dbReference type="Proteomes" id="UP000002675">
    <property type="component" value="Chromosome II"/>
</dbReference>
<dbReference type="GO" id="GO:0005737">
    <property type="term" value="C:cytoplasm"/>
    <property type="evidence" value="ECO:0007669"/>
    <property type="project" value="TreeGrafter"/>
</dbReference>
<dbReference type="GO" id="GO:0005525">
    <property type="term" value="F:GTP binding"/>
    <property type="evidence" value="ECO:0007669"/>
    <property type="project" value="UniProtKB-KW"/>
</dbReference>
<dbReference type="GO" id="GO:0003934">
    <property type="term" value="F:GTP cyclohydrolase I activity"/>
    <property type="evidence" value="ECO:0007669"/>
    <property type="project" value="UniProtKB-UniRule"/>
</dbReference>
<dbReference type="GO" id="GO:0008270">
    <property type="term" value="F:zinc ion binding"/>
    <property type="evidence" value="ECO:0007669"/>
    <property type="project" value="UniProtKB-UniRule"/>
</dbReference>
<dbReference type="GO" id="GO:0006730">
    <property type="term" value="P:one-carbon metabolic process"/>
    <property type="evidence" value="ECO:0007669"/>
    <property type="project" value="UniProtKB-UniRule"/>
</dbReference>
<dbReference type="GO" id="GO:0006729">
    <property type="term" value="P:tetrahydrobiopterin biosynthetic process"/>
    <property type="evidence" value="ECO:0007669"/>
    <property type="project" value="TreeGrafter"/>
</dbReference>
<dbReference type="GO" id="GO:0046654">
    <property type="term" value="P:tetrahydrofolate biosynthetic process"/>
    <property type="evidence" value="ECO:0007669"/>
    <property type="project" value="UniProtKB-UniRule"/>
</dbReference>
<dbReference type="FunFam" id="3.30.1130.10:FF:000001">
    <property type="entry name" value="GTP cyclohydrolase 1"/>
    <property type="match status" value="1"/>
</dbReference>
<dbReference type="Gene3D" id="1.10.286.10">
    <property type="match status" value="1"/>
</dbReference>
<dbReference type="Gene3D" id="3.30.1130.10">
    <property type="match status" value="1"/>
</dbReference>
<dbReference type="HAMAP" id="MF_00223">
    <property type="entry name" value="FolE"/>
    <property type="match status" value="1"/>
</dbReference>
<dbReference type="InterPro" id="IPR043133">
    <property type="entry name" value="GTP-CH-I_C/QueF"/>
</dbReference>
<dbReference type="InterPro" id="IPR043134">
    <property type="entry name" value="GTP-CH-I_N"/>
</dbReference>
<dbReference type="InterPro" id="IPR001474">
    <property type="entry name" value="GTP_CycHdrlase_I"/>
</dbReference>
<dbReference type="InterPro" id="IPR018234">
    <property type="entry name" value="GTP_CycHdrlase_I_CS"/>
</dbReference>
<dbReference type="InterPro" id="IPR020602">
    <property type="entry name" value="GTP_CycHdrlase_I_dom"/>
</dbReference>
<dbReference type="NCBIfam" id="TIGR00063">
    <property type="entry name" value="folE"/>
    <property type="match status" value="1"/>
</dbReference>
<dbReference type="NCBIfam" id="NF006824">
    <property type="entry name" value="PRK09347.1-1"/>
    <property type="match status" value="1"/>
</dbReference>
<dbReference type="NCBIfam" id="NF006825">
    <property type="entry name" value="PRK09347.1-2"/>
    <property type="match status" value="1"/>
</dbReference>
<dbReference type="NCBIfam" id="NF006826">
    <property type="entry name" value="PRK09347.1-3"/>
    <property type="match status" value="1"/>
</dbReference>
<dbReference type="PANTHER" id="PTHR11109:SF7">
    <property type="entry name" value="GTP CYCLOHYDROLASE 1"/>
    <property type="match status" value="1"/>
</dbReference>
<dbReference type="PANTHER" id="PTHR11109">
    <property type="entry name" value="GTP CYCLOHYDROLASE I"/>
    <property type="match status" value="1"/>
</dbReference>
<dbReference type="Pfam" id="PF01227">
    <property type="entry name" value="GTP_cyclohydroI"/>
    <property type="match status" value="1"/>
</dbReference>
<dbReference type="SUPFAM" id="SSF55620">
    <property type="entry name" value="Tetrahydrobiopterin biosynthesis enzymes-like"/>
    <property type="match status" value="1"/>
</dbReference>
<dbReference type="PROSITE" id="PS00859">
    <property type="entry name" value="GTP_CYCLOHYDROL_1_1"/>
    <property type="match status" value="1"/>
</dbReference>
<dbReference type="PROSITE" id="PS00860">
    <property type="entry name" value="GTP_CYCLOHYDROL_1_2"/>
    <property type="match status" value="1"/>
</dbReference>
<evidence type="ECO:0000250" key="1"/>
<evidence type="ECO:0000255" key="2">
    <source>
        <dbReference type="HAMAP-Rule" id="MF_00223"/>
    </source>
</evidence>